<name>ATPE_GEOSM</name>
<organism>
    <name type="scientific">Geobacter sp. (strain M21)</name>
    <dbReference type="NCBI Taxonomy" id="443144"/>
    <lineage>
        <taxon>Bacteria</taxon>
        <taxon>Pseudomonadati</taxon>
        <taxon>Thermodesulfobacteriota</taxon>
        <taxon>Desulfuromonadia</taxon>
        <taxon>Geobacterales</taxon>
        <taxon>Geobacteraceae</taxon>
        <taxon>Geobacter</taxon>
    </lineage>
</organism>
<feature type="chain" id="PRO_1000211785" description="ATP synthase epsilon chain">
    <location>
        <begin position="1"/>
        <end position="138"/>
    </location>
</feature>
<keyword id="KW-0066">ATP synthesis</keyword>
<keyword id="KW-0997">Cell inner membrane</keyword>
<keyword id="KW-1003">Cell membrane</keyword>
<keyword id="KW-0139">CF(1)</keyword>
<keyword id="KW-0375">Hydrogen ion transport</keyword>
<keyword id="KW-0406">Ion transport</keyword>
<keyword id="KW-0472">Membrane</keyword>
<keyword id="KW-0813">Transport</keyword>
<accession>C6E9F0</accession>
<evidence type="ECO:0000255" key="1">
    <source>
        <dbReference type="HAMAP-Rule" id="MF_00530"/>
    </source>
</evidence>
<protein>
    <recommendedName>
        <fullName evidence="1">ATP synthase epsilon chain</fullName>
    </recommendedName>
    <alternativeName>
        <fullName evidence="1">ATP synthase F1 sector epsilon subunit</fullName>
    </alternativeName>
    <alternativeName>
        <fullName evidence="1">F-ATPase epsilon subunit</fullName>
    </alternativeName>
</protein>
<dbReference type="EMBL" id="CP001661">
    <property type="protein sequence ID" value="ACT20050.1"/>
    <property type="molecule type" value="Genomic_DNA"/>
</dbReference>
<dbReference type="SMR" id="C6E9F0"/>
<dbReference type="STRING" id="443144.GM21_4034"/>
<dbReference type="KEGG" id="gem:GM21_4034"/>
<dbReference type="eggNOG" id="COG0355">
    <property type="taxonomic scope" value="Bacteria"/>
</dbReference>
<dbReference type="HOGENOM" id="CLU_084338_1_3_7"/>
<dbReference type="OrthoDB" id="9799969at2"/>
<dbReference type="GO" id="GO:0005886">
    <property type="term" value="C:plasma membrane"/>
    <property type="evidence" value="ECO:0007669"/>
    <property type="project" value="UniProtKB-SubCell"/>
</dbReference>
<dbReference type="GO" id="GO:0045259">
    <property type="term" value="C:proton-transporting ATP synthase complex"/>
    <property type="evidence" value="ECO:0007669"/>
    <property type="project" value="UniProtKB-KW"/>
</dbReference>
<dbReference type="GO" id="GO:0005524">
    <property type="term" value="F:ATP binding"/>
    <property type="evidence" value="ECO:0007669"/>
    <property type="project" value="UniProtKB-UniRule"/>
</dbReference>
<dbReference type="GO" id="GO:0046933">
    <property type="term" value="F:proton-transporting ATP synthase activity, rotational mechanism"/>
    <property type="evidence" value="ECO:0007669"/>
    <property type="project" value="UniProtKB-UniRule"/>
</dbReference>
<dbReference type="CDD" id="cd12152">
    <property type="entry name" value="F1-ATPase_delta"/>
    <property type="match status" value="1"/>
</dbReference>
<dbReference type="FunFam" id="2.60.15.10:FF:000001">
    <property type="entry name" value="ATP synthase epsilon chain"/>
    <property type="match status" value="1"/>
</dbReference>
<dbReference type="Gene3D" id="1.20.5.440">
    <property type="entry name" value="ATP synthase delta/epsilon subunit, C-terminal domain"/>
    <property type="match status" value="1"/>
</dbReference>
<dbReference type="Gene3D" id="2.60.15.10">
    <property type="entry name" value="F0F1 ATP synthase delta/epsilon subunit, N-terminal"/>
    <property type="match status" value="1"/>
</dbReference>
<dbReference type="HAMAP" id="MF_00530">
    <property type="entry name" value="ATP_synth_epsil_bac"/>
    <property type="match status" value="1"/>
</dbReference>
<dbReference type="InterPro" id="IPR001469">
    <property type="entry name" value="ATP_synth_F1_dsu/esu"/>
</dbReference>
<dbReference type="InterPro" id="IPR020546">
    <property type="entry name" value="ATP_synth_F1_dsu/esu_N"/>
</dbReference>
<dbReference type="InterPro" id="IPR020547">
    <property type="entry name" value="ATP_synth_F1_esu_C"/>
</dbReference>
<dbReference type="InterPro" id="IPR036771">
    <property type="entry name" value="ATPsynth_dsu/esu_N"/>
</dbReference>
<dbReference type="NCBIfam" id="TIGR01216">
    <property type="entry name" value="ATP_synt_epsi"/>
    <property type="match status" value="1"/>
</dbReference>
<dbReference type="NCBIfam" id="NF009980">
    <property type="entry name" value="PRK13446.1"/>
    <property type="match status" value="1"/>
</dbReference>
<dbReference type="PANTHER" id="PTHR13822">
    <property type="entry name" value="ATP SYNTHASE DELTA/EPSILON CHAIN"/>
    <property type="match status" value="1"/>
</dbReference>
<dbReference type="PANTHER" id="PTHR13822:SF10">
    <property type="entry name" value="ATP SYNTHASE EPSILON CHAIN, CHLOROPLASTIC"/>
    <property type="match status" value="1"/>
</dbReference>
<dbReference type="Pfam" id="PF00401">
    <property type="entry name" value="ATP-synt_DE"/>
    <property type="match status" value="1"/>
</dbReference>
<dbReference type="Pfam" id="PF02823">
    <property type="entry name" value="ATP-synt_DE_N"/>
    <property type="match status" value="1"/>
</dbReference>
<dbReference type="SUPFAM" id="SSF51344">
    <property type="entry name" value="Epsilon subunit of F1F0-ATP synthase N-terminal domain"/>
    <property type="match status" value="1"/>
</dbReference>
<gene>
    <name evidence="1" type="primary">atpC</name>
    <name type="ordered locus">GM21_4034</name>
</gene>
<reference key="1">
    <citation type="submission" date="2009-07" db="EMBL/GenBank/DDBJ databases">
        <title>Complete sequence of Geobacter sp. M21.</title>
        <authorList>
            <consortium name="US DOE Joint Genome Institute"/>
            <person name="Lucas S."/>
            <person name="Copeland A."/>
            <person name="Lapidus A."/>
            <person name="Glavina del Rio T."/>
            <person name="Dalin E."/>
            <person name="Tice H."/>
            <person name="Bruce D."/>
            <person name="Goodwin L."/>
            <person name="Pitluck S."/>
            <person name="Saunders E."/>
            <person name="Brettin T."/>
            <person name="Detter J.C."/>
            <person name="Han C."/>
            <person name="Larimer F."/>
            <person name="Land M."/>
            <person name="Hauser L."/>
            <person name="Kyrpides N."/>
            <person name="Ovchinnikova G."/>
            <person name="Lovley D."/>
        </authorList>
    </citation>
    <scope>NUCLEOTIDE SEQUENCE [LARGE SCALE GENOMIC DNA]</scope>
    <source>
        <strain>M21</strain>
    </source>
</reference>
<sequence>MAEKLKVELVTPYKKVLSEEVDEITATGALGEFGVLPGHAPFLTSLKIGELAYRKDGVSHHMALNWGYFEVENDTVTVLVETAEKADEIDLERAKAALGRAEVELKALTPEDKNFRIYEAALERALIRVQVAGKATRR</sequence>
<proteinExistence type="inferred from homology"/>
<comment type="function">
    <text evidence="1">Produces ATP from ADP in the presence of a proton gradient across the membrane.</text>
</comment>
<comment type="subunit">
    <text evidence="1">F-type ATPases have 2 components, CF(1) - the catalytic core - and CF(0) - the membrane proton channel. CF(1) has five subunits: alpha(3), beta(3), gamma(1), delta(1), epsilon(1). CF(0) has three main subunits: a, b and c.</text>
</comment>
<comment type="subcellular location">
    <subcellularLocation>
        <location evidence="1">Cell inner membrane</location>
        <topology evidence="1">Peripheral membrane protein</topology>
    </subcellularLocation>
</comment>
<comment type="similarity">
    <text evidence="1">Belongs to the ATPase epsilon chain family.</text>
</comment>